<keyword id="KW-0112">Calmodulin-binding</keyword>
<keyword id="KW-1185">Reference proteome</keyword>
<keyword id="KW-0677">Repeat</keyword>
<keyword id="KW-0802">TPR repeat</keyword>
<organism>
    <name type="scientific">Arabidopsis thaliana</name>
    <name type="common">Mouse-ear cress</name>
    <dbReference type="NCBI Taxonomy" id="3702"/>
    <lineage>
        <taxon>Eukaryota</taxon>
        <taxon>Viridiplantae</taxon>
        <taxon>Streptophyta</taxon>
        <taxon>Embryophyta</taxon>
        <taxon>Tracheophyta</taxon>
        <taxon>Spermatophyta</taxon>
        <taxon>Magnoliopsida</taxon>
        <taxon>eudicotyledons</taxon>
        <taxon>Gunneridae</taxon>
        <taxon>Pentapetalae</taxon>
        <taxon>rosids</taxon>
        <taxon>malvids</taxon>
        <taxon>Brassicales</taxon>
        <taxon>Brassicaceae</taxon>
        <taxon>Camelineae</taxon>
        <taxon>Arabidopsis</taxon>
    </lineage>
</organism>
<comment type="subunit">
    <text evidence="4 5">Interacts with calmodulin in a calcium-dependent manner.</text>
</comment>
<comment type="tissue specificity">
    <text evidence="5">Expressed in pollen, flowers, fruits and leaves.</text>
</comment>
<protein>
    <recommendedName>
        <fullName evidence="6">Protein NPGR1</fullName>
    </recommendedName>
    <alternativeName>
        <fullName evidence="6">NO POLLEN GERMINATION RELATED 1</fullName>
    </alternativeName>
</protein>
<reference key="1">
    <citation type="journal article" date="2003" name="Proc. Natl. Acad. Sci. U.S.A.">
        <title>A calmodulin-binding protein from Arabidopsis has an essential role in pollen germination.</title>
        <authorList>
            <person name="Golovkin M."/>
            <person name="Reddy A."/>
        </authorList>
    </citation>
    <scope>NUCLEOTIDE SEQUENCE [MRNA]</scope>
    <scope>GENE FAMILY</scope>
    <scope>NOMENCLATURE</scope>
    <scope>INTERACTION WITH CALMODULIN</scope>
    <scope>TISSUE SPECIFICITY</scope>
</reference>
<reference key="2">
    <citation type="journal article" date="2000" name="Nature">
        <title>Sequence and analysis of chromosome 1 of the plant Arabidopsis thaliana.</title>
        <authorList>
            <person name="Theologis A."/>
            <person name="Ecker J.R."/>
            <person name="Palm C.J."/>
            <person name="Federspiel N.A."/>
            <person name="Kaul S."/>
            <person name="White O."/>
            <person name="Alonso J."/>
            <person name="Altafi H."/>
            <person name="Araujo R."/>
            <person name="Bowman C.L."/>
            <person name="Brooks S.Y."/>
            <person name="Buehler E."/>
            <person name="Chan A."/>
            <person name="Chao Q."/>
            <person name="Chen H."/>
            <person name="Cheuk R.F."/>
            <person name="Chin C.W."/>
            <person name="Chung M.K."/>
            <person name="Conn L."/>
            <person name="Conway A.B."/>
            <person name="Conway A.R."/>
            <person name="Creasy T.H."/>
            <person name="Dewar K."/>
            <person name="Dunn P."/>
            <person name="Etgu P."/>
            <person name="Feldblyum T.V."/>
            <person name="Feng J.-D."/>
            <person name="Fong B."/>
            <person name="Fujii C.Y."/>
            <person name="Gill J.E."/>
            <person name="Goldsmith A.D."/>
            <person name="Haas B."/>
            <person name="Hansen N.F."/>
            <person name="Hughes B."/>
            <person name="Huizar L."/>
            <person name="Hunter J.L."/>
            <person name="Jenkins J."/>
            <person name="Johnson-Hopson C."/>
            <person name="Khan S."/>
            <person name="Khaykin E."/>
            <person name="Kim C.J."/>
            <person name="Koo H.L."/>
            <person name="Kremenetskaia I."/>
            <person name="Kurtz D.B."/>
            <person name="Kwan A."/>
            <person name="Lam B."/>
            <person name="Langin-Hooper S."/>
            <person name="Lee A."/>
            <person name="Lee J.M."/>
            <person name="Lenz C.A."/>
            <person name="Li J.H."/>
            <person name="Li Y.-P."/>
            <person name="Lin X."/>
            <person name="Liu S.X."/>
            <person name="Liu Z.A."/>
            <person name="Luros J.S."/>
            <person name="Maiti R."/>
            <person name="Marziali A."/>
            <person name="Militscher J."/>
            <person name="Miranda M."/>
            <person name="Nguyen M."/>
            <person name="Nierman W.C."/>
            <person name="Osborne B.I."/>
            <person name="Pai G."/>
            <person name="Peterson J."/>
            <person name="Pham P.K."/>
            <person name="Rizzo M."/>
            <person name="Rooney T."/>
            <person name="Rowley D."/>
            <person name="Sakano H."/>
            <person name="Salzberg S.L."/>
            <person name="Schwartz J.R."/>
            <person name="Shinn P."/>
            <person name="Southwick A.M."/>
            <person name="Sun H."/>
            <person name="Tallon L.J."/>
            <person name="Tambunga G."/>
            <person name="Toriumi M.J."/>
            <person name="Town C.D."/>
            <person name="Utterback T."/>
            <person name="Van Aken S."/>
            <person name="Vaysberg M."/>
            <person name="Vysotskaia V.S."/>
            <person name="Walker M."/>
            <person name="Wu D."/>
            <person name="Yu G."/>
            <person name="Fraser C.M."/>
            <person name="Venter J.C."/>
            <person name="Davis R.W."/>
        </authorList>
    </citation>
    <scope>NUCLEOTIDE SEQUENCE [LARGE SCALE GENOMIC DNA]</scope>
    <source>
        <strain>cv. Columbia</strain>
    </source>
</reference>
<reference key="3">
    <citation type="journal article" date="2017" name="Plant J.">
        <title>Araport11: a complete reannotation of the Arabidopsis thaliana reference genome.</title>
        <authorList>
            <person name="Cheng C.Y."/>
            <person name="Krishnakumar V."/>
            <person name="Chan A.P."/>
            <person name="Thibaud-Nissen F."/>
            <person name="Schobel S."/>
            <person name="Town C.D."/>
        </authorList>
    </citation>
    <scope>GENOME REANNOTATION</scope>
    <source>
        <strain>cv. Columbia</strain>
    </source>
</reference>
<reference key="4">
    <citation type="journal article" date="2003" name="Science">
        <title>Empirical analysis of transcriptional activity in the Arabidopsis genome.</title>
        <authorList>
            <person name="Yamada K."/>
            <person name="Lim J."/>
            <person name="Dale J.M."/>
            <person name="Chen H."/>
            <person name="Shinn P."/>
            <person name="Palm C.J."/>
            <person name="Southwick A.M."/>
            <person name="Wu H.C."/>
            <person name="Kim C.J."/>
            <person name="Nguyen M."/>
            <person name="Pham P.K."/>
            <person name="Cheuk R.F."/>
            <person name="Karlin-Newmann G."/>
            <person name="Liu S.X."/>
            <person name="Lam B."/>
            <person name="Sakano H."/>
            <person name="Wu T."/>
            <person name="Yu G."/>
            <person name="Miranda M."/>
            <person name="Quach H.L."/>
            <person name="Tripp M."/>
            <person name="Chang C.H."/>
            <person name="Lee J.M."/>
            <person name="Toriumi M.J."/>
            <person name="Chan M.M."/>
            <person name="Tang C.C."/>
            <person name="Onodera C.S."/>
            <person name="Deng J.M."/>
            <person name="Akiyama K."/>
            <person name="Ansari Y."/>
            <person name="Arakawa T."/>
            <person name="Banh J."/>
            <person name="Banno F."/>
            <person name="Bowser L."/>
            <person name="Brooks S.Y."/>
            <person name="Carninci P."/>
            <person name="Chao Q."/>
            <person name="Choy N."/>
            <person name="Enju A."/>
            <person name="Goldsmith A.D."/>
            <person name="Gurjal M."/>
            <person name="Hansen N.F."/>
            <person name="Hayashizaki Y."/>
            <person name="Johnson-Hopson C."/>
            <person name="Hsuan V.W."/>
            <person name="Iida K."/>
            <person name="Karnes M."/>
            <person name="Khan S."/>
            <person name="Koesema E."/>
            <person name="Ishida J."/>
            <person name="Jiang P.X."/>
            <person name="Jones T."/>
            <person name="Kawai J."/>
            <person name="Kamiya A."/>
            <person name="Meyers C."/>
            <person name="Nakajima M."/>
            <person name="Narusaka M."/>
            <person name="Seki M."/>
            <person name="Sakurai T."/>
            <person name="Satou M."/>
            <person name="Tamse R."/>
            <person name="Vaysberg M."/>
            <person name="Wallender E.K."/>
            <person name="Wong C."/>
            <person name="Yamamura Y."/>
            <person name="Yuan S."/>
            <person name="Shinozaki K."/>
            <person name="Davis R.W."/>
            <person name="Theologis A."/>
            <person name="Ecker J.R."/>
        </authorList>
    </citation>
    <scope>NUCLEOTIDE SEQUENCE [LARGE SCALE MRNA]</scope>
    <source>
        <strain>cv. Columbia</strain>
    </source>
</reference>
<reference key="5">
    <citation type="journal article" date="2002" name="J. Biol. Chem.">
        <title>Genes encoding calmodulin-binding proteins in the Arabidopsis genome.</title>
        <authorList>
            <person name="Reddy V.S."/>
            <person name="Ali G.S."/>
            <person name="Reddy A.S.N."/>
        </authorList>
    </citation>
    <scope>INTERACTION WITH CALMODULIN</scope>
</reference>
<sequence length="694" mass="76871">MLCACSGEQFRFEDQPGSPESLATRDFSASGLSSRNGGGDWDSKLEDIQVDEAESTLKEALSLNYEEARALLGRLEYQRGNFDAALQVFKGIDIKVLTPRIIKAIVEKTLPCKPRSKAVIVPPTTMSMHSVSLLLEAILLKARSLEELGSYKEAAEECKIILDVVENALPSGMPDGISGFAKLQDIFQKALELLPLLWKKAGNHHETIASYRRALSRPWNLDPQRLAVTQKSLALVLLYGSVEACPKDNIEEAIVLLMLLVKKMVVGDIQWDPELMDHLTYALSMTGQFEVLANYLEQTLPGVYTRGERWYLLSLCYSAAGIDKAAINLLKMALGPSESRQIPHIPLLLFGAKLCSKDPKHSRDGINFAHRLLDLGNSQSEHLLSQAHKFLGVCYGNAARSSKLDSERVFLQKKSLFSLNEAAKRGKADPELDVIFNLSVENAVQRNVQAALDGAVEYSSMVGGVSTKGWKHLAIVLSAEKRLKDAESILDFTMEEAGDIEKIELLRLKAVLQMAQEQPKKAMKTCSSLLGLIRAQEKSEQSESLLQKFETEAWQDLASVYGKLGSWSDAETCLEKARSMCYYSPRGWNETGLCLEAKSLHEEALISFFLSLSIEPDHVPSIVSIAEVMMKSGDESLPTAKSFLMNALRLDPRNHDAWMKLGHVAKKQGLSQQAAEFYQAAYELELSAPVQSFI</sequence>
<gene>
    <name evidence="6" type="primary">NPGR1</name>
    <name evidence="7" type="ordered locus">At1g27460</name>
    <name evidence="8" type="ORF">F17L21.25</name>
</gene>
<proteinExistence type="evidence at protein level"/>
<dbReference type="EMBL" id="AC004557">
    <property type="protein sequence ID" value="AAF99738.1"/>
    <property type="molecule type" value="Genomic_DNA"/>
</dbReference>
<dbReference type="EMBL" id="CP002684">
    <property type="protein sequence ID" value="AEE30834.1"/>
    <property type="molecule type" value="Genomic_DNA"/>
</dbReference>
<dbReference type="EMBL" id="AF428415">
    <property type="protein sequence ID" value="AAL16183.1"/>
    <property type="molecule type" value="mRNA"/>
</dbReference>
<dbReference type="EMBL" id="BT010131">
    <property type="protein sequence ID" value="AAQ22600.1"/>
    <property type="molecule type" value="mRNA"/>
</dbReference>
<dbReference type="RefSeq" id="NP_564285.1">
    <property type="nucleotide sequence ID" value="NM_102510.2"/>
</dbReference>
<dbReference type="SMR" id="Q9CB03"/>
<dbReference type="FunCoup" id="Q9CB03">
    <property type="interactions" value="368"/>
</dbReference>
<dbReference type="STRING" id="3702.Q9CB03"/>
<dbReference type="iPTMnet" id="Q9CB03"/>
<dbReference type="PaxDb" id="3702-AT1G27460.1"/>
<dbReference type="ProteomicsDB" id="250542"/>
<dbReference type="EnsemblPlants" id="AT1G27460.1">
    <property type="protein sequence ID" value="AT1G27460.1"/>
    <property type="gene ID" value="AT1G27460"/>
</dbReference>
<dbReference type="GeneID" id="839637"/>
<dbReference type="Gramene" id="AT1G27460.1">
    <property type="protein sequence ID" value="AT1G27460.1"/>
    <property type="gene ID" value="AT1G27460"/>
</dbReference>
<dbReference type="KEGG" id="ath:AT1G27460"/>
<dbReference type="Araport" id="AT1G27460"/>
<dbReference type="TAIR" id="AT1G27460">
    <property type="gene designation" value="NPGR1"/>
</dbReference>
<dbReference type="eggNOG" id="KOG4162">
    <property type="taxonomic scope" value="Eukaryota"/>
</dbReference>
<dbReference type="HOGENOM" id="CLU_024601_0_0_1"/>
<dbReference type="InParanoid" id="Q9CB03"/>
<dbReference type="OMA" id="EYYLACQ"/>
<dbReference type="PhylomeDB" id="Q9CB03"/>
<dbReference type="PRO" id="PR:Q9CB03"/>
<dbReference type="Proteomes" id="UP000006548">
    <property type="component" value="Chromosome 1"/>
</dbReference>
<dbReference type="ExpressionAtlas" id="Q9CB03">
    <property type="expression patterns" value="baseline and differential"/>
</dbReference>
<dbReference type="GO" id="GO:0031234">
    <property type="term" value="C:extrinsic component of cytoplasmic side of plasma membrane"/>
    <property type="evidence" value="ECO:0000314"/>
    <property type="project" value="TAIR"/>
</dbReference>
<dbReference type="GO" id="GO:0005886">
    <property type="term" value="C:plasma membrane"/>
    <property type="evidence" value="ECO:0000314"/>
    <property type="project" value="TAIR"/>
</dbReference>
<dbReference type="GO" id="GO:0005516">
    <property type="term" value="F:calmodulin binding"/>
    <property type="evidence" value="ECO:0000304"/>
    <property type="project" value="TAIR"/>
</dbReference>
<dbReference type="Gene3D" id="1.25.40.10">
    <property type="entry name" value="Tetratricopeptide repeat domain"/>
    <property type="match status" value="2"/>
</dbReference>
<dbReference type="InterPro" id="IPR043376">
    <property type="entry name" value="NPG1-like"/>
</dbReference>
<dbReference type="InterPro" id="IPR011990">
    <property type="entry name" value="TPR-like_helical_dom_sf"/>
</dbReference>
<dbReference type="InterPro" id="IPR019734">
    <property type="entry name" value="TPR_rpt"/>
</dbReference>
<dbReference type="PANTHER" id="PTHR44102">
    <property type="entry name" value="PROTEIN NPG1"/>
    <property type="match status" value="1"/>
</dbReference>
<dbReference type="PANTHER" id="PTHR44102:SF4">
    <property type="entry name" value="PROTEIN NPGR1"/>
    <property type="match status" value="1"/>
</dbReference>
<dbReference type="Pfam" id="PF13432">
    <property type="entry name" value="TPR_16"/>
    <property type="match status" value="3"/>
</dbReference>
<dbReference type="SMART" id="SM00028">
    <property type="entry name" value="TPR"/>
    <property type="match status" value="6"/>
</dbReference>
<dbReference type="SUPFAM" id="SSF48452">
    <property type="entry name" value="TPR-like"/>
    <property type="match status" value="2"/>
</dbReference>
<dbReference type="PROSITE" id="PS50293">
    <property type="entry name" value="TPR_REGION"/>
    <property type="match status" value="1"/>
</dbReference>
<feature type="chain" id="PRO_0000438623" description="Protein NPGR1">
    <location>
        <begin position="1"/>
        <end position="694"/>
    </location>
</feature>
<feature type="repeat" description="TPR 1" evidence="1">
    <location>
        <begin position="32"/>
        <end position="65"/>
    </location>
</feature>
<feature type="repeat" description="TPR 2" evidence="1">
    <location>
        <begin position="66"/>
        <end position="101"/>
    </location>
</feature>
<feature type="repeat" description="TPR 3" evidence="1">
    <location>
        <begin position="135"/>
        <end position="168"/>
    </location>
</feature>
<feature type="repeat" description="TPR 4" evidence="1">
    <location>
        <begin position="188"/>
        <end position="221"/>
    </location>
</feature>
<feature type="repeat" description="TPR 5" evidence="1">
    <location>
        <begin position="307"/>
        <end position="340"/>
    </location>
</feature>
<feature type="repeat" description="TPR 6" evidence="2">
    <location>
        <begin position="551"/>
        <end position="584"/>
    </location>
</feature>
<feature type="repeat" description="TPR 7" evidence="2">
    <location>
        <begin position="585"/>
        <end position="618"/>
    </location>
</feature>
<feature type="repeat" description="TPR 8" evidence="1">
    <location>
        <begin position="620"/>
        <end position="654"/>
    </location>
</feature>
<feature type="repeat" description="TPR 9" evidence="2">
    <location>
        <begin position="655"/>
        <end position="688"/>
    </location>
</feature>
<feature type="region of interest" description="Disordered" evidence="3">
    <location>
        <begin position="12"/>
        <end position="40"/>
    </location>
</feature>
<name>NPGR1_ARATH</name>
<accession>Q9CB03</accession>
<evidence type="ECO:0000255" key="1"/>
<evidence type="ECO:0000255" key="2">
    <source>
        <dbReference type="PROSITE-ProRule" id="PRU00339"/>
    </source>
</evidence>
<evidence type="ECO:0000256" key="3">
    <source>
        <dbReference type="SAM" id="MobiDB-lite"/>
    </source>
</evidence>
<evidence type="ECO:0000269" key="4">
    <source>
    </source>
</evidence>
<evidence type="ECO:0000269" key="5">
    <source>
    </source>
</evidence>
<evidence type="ECO:0000303" key="6">
    <source>
    </source>
</evidence>
<evidence type="ECO:0000312" key="7">
    <source>
        <dbReference type="Araport" id="AT1G27460"/>
    </source>
</evidence>
<evidence type="ECO:0000312" key="8">
    <source>
        <dbReference type="EMBL" id="AAF99738.1"/>
    </source>
</evidence>